<protein>
    <recommendedName>
        <fullName evidence="4">Large ribosomal subunit protein uL24m</fullName>
    </recommendedName>
    <alternativeName>
        <fullName evidence="4">39S ribosomal protein L24, mitochondrial</fullName>
        <shortName>L24mt</shortName>
        <shortName>MRP-L24</shortName>
    </alternativeName>
</protein>
<organism>
    <name type="scientific">Danio rerio</name>
    <name type="common">Zebrafish</name>
    <name type="synonym">Brachydanio rerio</name>
    <dbReference type="NCBI Taxonomy" id="7955"/>
    <lineage>
        <taxon>Eukaryota</taxon>
        <taxon>Metazoa</taxon>
        <taxon>Chordata</taxon>
        <taxon>Craniata</taxon>
        <taxon>Vertebrata</taxon>
        <taxon>Euteleostomi</taxon>
        <taxon>Actinopterygii</taxon>
        <taxon>Neopterygii</taxon>
        <taxon>Teleostei</taxon>
        <taxon>Ostariophysi</taxon>
        <taxon>Cypriniformes</taxon>
        <taxon>Danionidae</taxon>
        <taxon>Danioninae</taxon>
        <taxon>Danio</taxon>
    </lineage>
</organism>
<reference key="1">
    <citation type="journal article" date="2013" name="Nature">
        <title>The zebrafish reference genome sequence and its relationship to the human genome.</title>
        <authorList>
            <person name="Howe K."/>
            <person name="Clark M.D."/>
            <person name="Torroja C.F."/>
            <person name="Torrance J."/>
            <person name="Berthelot C."/>
            <person name="Muffato M."/>
            <person name="Collins J.E."/>
            <person name="Humphray S."/>
            <person name="McLaren K."/>
            <person name="Matthews L."/>
            <person name="McLaren S."/>
            <person name="Sealy I."/>
            <person name="Caccamo M."/>
            <person name="Churcher C."/>
            <person name="Scott C."/>
            <person name="Barrett J.C."/>
            <person name="Koch R."/>
            <person name="Rauch G.J."/>
            <person name="White S."/>
            <person name="Chow W."/>
            <person name="Kilian B."/>
            <person name="Quintais L.T."/>
            <person name="Guerra-Assuncao J.A."/>
            <person name="Zhou Y."/>
            <person name="Gu Y."/>
            <person name="Yen J."/>
            <person name="Vogel J.H."/>
            <person name="Eyre T."/>
            <person name="Redmond S."/>
            <person name="Banerjee R."/>
            <person name="Chi J."/>
            <person name="Fu B."/>
            <person name="Langley E."/>
            <person name="Maguire S.F."/>
            <person name="Laird G.K."/>
            <person name="Lloyd D."/>
            <person name="Kenyon E."/>
            <person name="Donaldson S."/>
            <person name="Sehra H."/>
            <person name="Almeida-King J."/>
            <person name="Loveland J."/>
            <person name="Trevanion S."/>
            <person name="Jones M."/>
            <person name="Quail M."/>
            <person name="Willey D."/>
            <person name="Hunt A."/>
            <person name="Burton J."/>
            <person name="Sims S."/>
            <person name="McLay K."/>
            <person name="Plumb B."/>
            <person name="Davis J."/>
            <person name="Clee C."/>
            <person name="Oliver K."/>
            <person name="Clark R."/>
            <person name="Riddle C."/>
            <person name="Elliot D."/>
            <person name="Threadgold G."/>
            <person name="Harden G."/>
            <person name="Ware D."/>
            <person name="Begum S."/>
            <person name="Mortimore B."/>
            <person name="Kerry G."/>
            <person name="Heath P."/>
            <person name="Phillimore B."/>
            <person name="Tracey A."/>
            <person name="Corby N."/>
            <person name="Dunn M."/>
            <person name="Johnson C."/>
            <person name="Wood J."/>
            <person name="Clark S."/>
            <person name="Pelan S."/>
            <person name="Griffiths G."/>
            <person name="Smith M."/>
            <person name="Glithero R."/>
            <person name="Howden P."/>
            <person name="Barker N."/>
            <person name="Lloyd C."/>
            <person name="Stevens C."/>
            <person name="Harley J."/>
            <person name="Holt K."/>
            <person name="Panagiotidis G."/>
            <person name="Lovell J."/>
            <person name="Beasley H."/>
            <person name="Henderson C."/>
            <person name="Gordon D."/>
            <person name="Auger K."/>
            <person name="Wright D."/>
            <person name="Collins J."/>
            <person name="Raisen C."/>
            <person name="Dyer L."/>
            <person name="Leung K."/>
            <person name="Robertson L."/>
            <person name="Ambridge K."/>
            <person name="Leongamornlert D."/>
            <person name="McGuire S."/>
            <person name="Gilderthorp R."/>
            <person name="Griffiths C."/>
            <person name="Manthravadi D."/>
            <person name="Nichol S."/>
            <person name="Barker G."/>
            <person name="Whitehead S."/>
            <person name="Kay M."/>
            <person name="Brown J."/>
            <person name="Murnane C."/>
            <person name="Gray E."/>
            <person name="Humphries M."/>
            <person name="Sycamore N."/>
            <person name="Barker D."/>
            <person name="Saunders D."/>
            <person name="Wallis J."/>
            <person name="Babbage A."/>
            <person name="Hammond S."/>
            <person name="Mashreghi-Mohammadi M."/>
            <person name="Barr L."/>
            <person name="Martin S."/>
            <person name="Wray P."/>
            <person name="Ellington A."/>
            <person name="Matthews N."/>
            <person name="Ellwood M."/>
            <person name="Woodmansey R."/>
            <person name="Clark G."/>
            <person name="Cooper J."/>
            <person name="Tromans A."/>
            <person name="Grafham D."/>
            <person name="Skuce C."/>
            <person name="Pandian R."/>
            <person name="Andrews R."/>
            <person name="Harrison E."/>
            <person name="Kimberley A."/>
            <person name="Garnett J."/>
            <person name="Fosker N."/>
            <person name="Hall R."/>
            <person name="Garner P."/>
            <person name="Kelly D."/>
            <person name="Bird C."/>
            <person name="Palmer S."/>
            <person name="Gehring I."/>
            <person name="Berger A."/>
            <person name="Dooley C.M."/>
            <person name="Ersan-Urun Z."/>
            <person name="Eser C."/>
            <person name="Geiger H."/>
            <person name="Geisler M."/>
            <person name="Karotki L."/>
            <person name="Kirn A."/>
            <person name="Konantz J."/>
            <person name="Konantz M."/>
            <person name="Oberlander M."/>
            <person name="Rudolph-Geiger S."/>
            <person name="Teucke M."/>
            <person name="Lanz C."/>
            <person name="Raddatz G."/>
            <person name="Osoegawa K."/>
            <person name="Zhu B."/>
            <person name="Rapp A."/>
            <person name="Widaa S."/>
            <person name="Langford C."/>
            <person name="Yang F."/>
            <person name="Schuster S.C."/>
            <person name="Carter N.P."/>
            <person name="Harrow J."/>
            <person name="Ning Z."/>
            <person name="Herrero J."/>
            <person name="Searle S.M."/>
            <person name="Enright A."/>
            <person name="Geisler R."/>
            <person name="Plasterk R.H."/>
            <person name="Lee C."/>
            <person name="Westerfield M."/>
            <person name="de Jong P.J."/>
            <person name="Zon L.I."/>
            <person name="Postlethwait J.H."/>
            <person name="Nusslein-Volhard C."/>
            <person name="Hubbard T.J."/>
            <person name="Roest Crollius H."/>
            <person name="Rogers J."/>
            <person name="Stemple D.L."/>
        </authorList>
    </citation>
    <scope>NUCLEOTIDE SEQUENCE [LARGE SCALE GENOMIC DNA]</scope>
    <source>
        <strain>Tuebingen</strain>
    </source>
</reference>
<reference key="2">
    <citation type="submission" date="2004-07" db="EMBL/GenBank/DDBJ databases">
        <authorList>
            <consortium name="NIH - Zebrafish Gene Collection (ZGC) project"/>
        </authorList>
    </citation>
    <scope>NUCLEOTIDE SEQUENCE [LARGE SCALE MRNA]</scope>
    <source>
        <tissue>Eye</tissue>
    </source>
</reference>
<evidence type="ECO:0000250" key="1"/>
<evidence type="ECO:0000250" key="2">
    <source>
        <dbReference type="UniProtKB" id="Q96A35"/>
    </source>
</evidence>
<evidence type="ECO:0000256" key="3">
    <source>
        <dbReference type="SAM" id="MobiDB-lite"/>
    </source>
</evidence>
<evidence type="ECO:0000305" key="4"/>
<sequence length="216" mass="25045">MRLTALLSMAAKVALPHGYRYGTNRPWTIAARRLNPPGKRRRKVFVEPIANEDWPVVRGDTVEVLSGKEKGKQGKVAQVIRARNWVILEGLNTHYRYVGRSGDYRGTYLASEAPLLLKDIALIDPTDRKPTEIQWRYTEEGERVRVSVRTGRIIPKPVFQRKDGIVPQQWKDGPKDTSPEDTLQKTYTPSLKTLEEEVMEKMNIQENRRPRKSYWY</sequence>
<feature type="transit peptide" description="Mitochondrion" evidence="1">
    <location>
        <begin position="1"/>
        <end position="9"/>
    </location>
</feature>
<feature type="chain" id="PRO_0000270491" description="Large ribosomal subunit protein uL24m">
    <location>
        <begin position="10"/>
        <end position="216"/>
    </location>
</feature>
<feature type="domain" description="KOW">
    <location>
        <begin position="56"/>
        <end position="89"/>
    </location>
</feature>
<feature type="region of interest" description="Disordered" evidence="3">
    <location>
        <begin position="167"/>
        <end position="186"/>
    </location>
</feature>
<proteinExistence type="evidence at transcript level"/>
<dbReference type="EMBL" id="BX927401">
    <property type="protein sequence ID" value="CAM56379.1"/>
    <property type="molecule type" value="Genomic_DNA"/>
</dbReference>
<dbReference type="EMBL" id="BC076182">
    <property type="protein sequence ID" value="AAH76182.1"/>
    <property type="molecule type" value="mRNA"/>
</dbReference>
<dbReference type="RefSeq" id="NP_001002401.1">
    <property type="nucleotide sequence ID" value="NM_001002401.1"/>
</dbReference>
<dbReference type="SMR" id="Q6DH02"/>
<dbReference type="FunCoup" id="Q6DH02">
    <property type="interactions" value="935"/>
</dbReference>
<dbReference type="STRING" id="7955.ENSDARP00000024527"/>
<dbReference type="PaxDb" id="7955-ENSDARP00000024527"/>
<dbReference type="Ensembl" id="ENSDART00000010862">
    <property type="protein sequence ID" value="ENSDARP00000024527"/>
    <property type="gene ID" value="ENSDARG00000019222"/>
</dbReference>
<dbReference type="GeneID" id="436674"/>
<dbReference type="KEGG" id="dre:436674"/>
<dbReference type="AGR" id="ZFIN:ZDB-GENE-040718-98"/>
<dbReference type="CTD" id="79590"/>
<dbReference type="ZFIN" id="ZDB-GENE-040718-98">
    <property type="gene designation" value="mrpl24"/>
</dbReference>
<dbReference type="eggNOG" id="KOG1708">
    <property type="taxonomic scope" value="Eukaryota"/>
</dbReference>
<dbReference type="HOGENOM" id="CLU_093315_0_1_1"/>
<dbReference type="InParanoid" id="Q6DH02"/>
<dbReference type="OMA" id="DFEWRFT"/>
<dbReference type="OrthoDB" id="359154at2759"/>
<dbReference type="PhylomeDB" id="Q6DH02"/>
<dbReference type="TreeFam" id="TF105984"/>
<dbReference type="Reactome" id="R-DRE-5389840">
    <property type="pathway name" value="Mitochondrial translation elongation"/>
</dbReference>
<dbReference type="Reactome" id="R-DRE-5419276">
    <property type="pathway name" value="Mitochondrial translation termination"/>
</dbReference>
<dbReference type="PRO" id="PR:Q6DH02"/>
<dbReference type="Proteomes" id="UP000000437">
    <property type="component" value="Chromosome 19"/>
</dbReference>
<dbReference type="Bgee" id="ENSDARG00000019222">
    <property type="expression patterns" value="Expressed in heart and 28 other cell types or tissues"/>
</dbReference>
<dbReference type="GO" id="GO:0005762">
    <property type="term" value="C:mitochondrial large ribosomal subunit"/>
    <property type="evidence" value="ECO:0000250"/>
    <property type="project" value="UniProtKB"/>
</dbReference>
<dbReference type="GO" id="GO:0005739">
    <property type="term" value="C:mitochondrion"/>
    <property type="evidence" value="ECO:0000318"/>
    <property type="project" value="GO_Central"/>
</dbReference>
<dbReference type="GO" id="GO:0003723">
    <property type="term" value="F:RNA binding"/>
    <property type="evidence" value="ECO:0007669"/>
    <property type="project" value="InterPro"/>
</dbReference>
<dbReference type="GO" id="GO:0003735">
    <property type="term" value="F:structural constituent of ribosome"/>
    <property type="evidence" value="ECO:0007669"/>
    <property type="project" value="InterPro"/>
</dbReference>
<dbReference type="GO" id="GO:0006754">
    <property type="term" value="P:ATP biosynthetic process"/>
    <property type="evidence" value="ECO:0000315"/>
    <property type="project" value="ZFIN"/>
</dbReference>
<dbReference type="GO" id="GO:0045333">
    <property type="term" value="P:cellular respiration"/>
    <property type="evidence" value="ECO:0000315"/>
    <property type="project" value="ZFIN"/>
</dbReference>
<dbReference type="GO" id="GO:0006412">
    <property type="term" value="P:translation"/>
    <property type="evidence" value="ECO:0000318"/>
    <property type="project" value="GO_Central"/>
</dbReference>
<dbReference type="CDD" id="cd06089">
    <property type="entry name" value="KOW_RPL26"/>
    <property type="match status" value="1"/>
</dbReference>
<dbReference type="FunFam" id="2.30.30.30:FF:000032">
    <property type="entry name" value="39S ribosomal protein L24, mitochondrial"/>
    <property type="match status" value="1"/>
</dbReference>
<dbReference type="Gene3D" id="2.30.30.30">
    <property type="match status" value="1"/>
</dbReference>
<dbReference type="HAMAP" id="MF_01326_B">
    <property type="entry name" value="Ribosomal_uL24_B"/>
    <property type="match status" value="1"/>
</dbReference>
<dbReference type="InterPro" id="IPR005824">
    <property type="entry name" value="KOW"/>
</dbReference>
<dbReference type="InterPro" id="IPR014722">
    <property type="entry name" value="Rib_uL2_dom2"/>
</dbReference>
<dbReference type="InterPro" id="IPR003256">
    <property type="entry name" value="Ribosomal_uL24"/>
</dbReference>
<dbReference type="InterPro" id="IPR005825">
    <property type="entry name" value="Ribosomal_uL24_CS"/>
</dbReference>
<dbReference type="InterPro" id="IPR041988">
    <property type="entry name" value="Ribosomal_uL24_KOW"/>
</dbReference>
<dbReference type="InterPro" id="IPR008991">
    <property type="entry name" value="Translation_prot_SH3-like_sf"/>
</dbReference>
<dbReference type="NCBIfam" id="TIGR01079">
    <property type="entry name" value="rplX_bact"/>
    <property type="match status" value="1"/>
</dbReference>
<dbReference type="PANTHER" id="PTHR12903">
    <property type="entry name" value="MITOCHONDRIAL RIBOSOMAL PROTEIN L24"/>
    <property type="match status" value="1"/>
</dbReference>
<dbReference type="Pfam" id="PF00467">
    <property type="entry name" value="KOW"/>
    <property type="match status" value="1"/>
</dbReference>
<dbReference type="Pfam" id="PF17136">
    <property type="entry name" value="ribosomal_L24"/>
    <property type="match status" value="1"/>
</dbReference>
<dbReference type="SMART" id="SM00739">
    <property type="entry name" value="KOW"/>
    <property type="match status" value="1"/>
</dbReference>
<dbReference type="SUPFAM" id="SSF50104">
    <property type="entry name" value="Translation proteins SH3-like domain"/>
    <property type="match status" value="1"/>
</dbReference>
<dbReference type="PROSITE" id="PS01108">
    <property type="entry name" value="RIBOSOMAL_L24"/>
    <property type="match status" value="1"/>
</dbReference>
<name>RM24_DANRE</name>
<accession>Q6DH02</accession>
<accession>A3KQS2</accession>
<keyword id="KW-0496">Mitochondrion</keyword>
<keyword id="KW-1185">Reference proteome</keyword>
<keyword id="KW-0687">Ribonucleoprotein</keyword>
<keyword id="KW-0689">Ribosomal protein</keyword>
<keyword id="KW-0809">Transit peptide</keyword>
<gene>
    <name type="primary">mrpl24</name>
    <name type="ORF">si:ch211-210h11.6</name>
    <name type="ORF">zgc:92702</name>
</gene>
<comment type="subunit">
    <text evidence="2">Component of the mitochondrial ribosome large subunit (39S) which comprises a 16S rRNA and about 50 distinct proteins.</text>
</comment>
<comment type="subcellular location">
    <subcellularLocation>
        <location evidence="2">Mitochondrion</location>
    </subcellularLocation>
</comment>
<comment type="similarity">
    <text evidence="4">Belongs to the universal ribosomal protein uL24 family.</text>
</comment>